<organism>
    <name type="scientific">Vibrio atlanticus (strain LGP32)</name>
    <name type="common">Vibrio splendidus (strain Mel32)</name>
    <dbReference type="NCBI Taxonomy" id="575788"/>
    <lineage>
        <taxon>Bacteria</taxon>
        <taxon>Pseudomonadati</taxon>
        <taxon>Pseudomonadota</taxon>
        <taxon>Gammaproteobacteria</taxon>
        <taxon>Vibrionales</taxon>
        <taxon>Vibrionaceae</taxon>
        <taxon>Vibrio</taxon>
    </lineage>
</organism>
<reference key="1">
    <citation type="submission" date="2009-02" db="EMBL/GenBank/DDBJ databases">
        <title>Vibrio splendidus str. LGP32 complete genome.</title>
        <authorList>
            <person name="Mazel D."/>
            <person name="Le Roux F."/>
        </authorList>
    </citation>
    <scope>NUCLEOTIDE SEQUENCE [LARGE SCALE GENOMIC DNA]</scope>
    <source>
        <strain>LGP32</strain>
    </source>
</reference>
<evidence type="ECO:0000255" key="1">
    <source>
        <dbReference type="HAMAP-Rule" id="MF_00361"/>
    </source>
</evidence>
<proteinExistence type="inferred from homology"/>
<sequence>MKKPFEVIAIIGKPRDQQAIQTHRELYQWLSTEGYQVFVDDRLATILDDIPQEHFSSLIELGKRADLAIVVGGDGNMLGAARILSRFDISVIGVNRGNLGFLTDLNPENFQSALTDVLKGEFMEEERFLLETEIHRHGQIKSHNAALNEAVLHPGQVAHMIEFEVYIDDSFAFSQRSDGLIVSTPTGSTAYSLSGGGPILSSSLNAISLVPMFPHTLSSRPLVVDGKRRIKLIVSPDNRGTQEVSCDGQISLPVSPGDEIHIYQSPNVLKLIHPKDYNYYHVLRNKLGWSSKLF</sequence>
<dbReference type="EC" id="2.7.1.23" evidence="1"/>
<dbReference type="EMBL" id="FM954972">
    <property type="protein sequence ID" value="CAV17642.1"/>
    <property type="molecule type" value="Genomic_DNA"/>
</dbReference>
<dbReference type="SMR" id="B7VJW6"/>
<dbReference type="STRING" id="575788.VS_0648"/>
<dbReference type="KEGG" id="vsp:VS_0648"/>
<dbReference type="PATRIC" id="fig|575788.5.peg.1998"/>
<dbReference type="eggNOG" id="COG0061">
    <property type="taxonomic scope" value="Bacteria"/>
</dbReference>
<dbReference type="HOGENOM" id="CLU_008831_0_1_6"/>
<dbReference type="Proteomes" id="UP000009100">
    <property type="component" value="Chromosome 1"/>
</dbReference>
<dbReference type="GO" id="GO:0005737">
    <property type="term" value="C:cytoplasm"/>
    <property type="evidence" value="ECO:0007669"/>
    <property type="project" value="UniProtKB-SubCell"/>
</dbReference>
<dbReference type="GO" id="GO:0005524">
    <property type="term" value="F:ATP binding"/>
    <property type="evidence" value="ECO:0007669"/>
    <property type="project" value="UniProtKB-KW"/>
</dbReference>
<dbReference type="GO" id="GO:0046872">
    <property type="term" value="F:metal ion binding"/>
    <property type="evidence" value="ECO:0007669"/>
    <property type="project" value="UniProtKB-UniRule"/>
</dbReference>
<dbReference type="GO" id="GO:0051287">
    <property type="term" value="F:NAD binding"/>
    <property type="evidence" value="ECO:0007669"/>
    <property type="project" value="UniProtKB-ARBA"/>
</dbReference>
<dbReference type="GO" id="GO:0003951">
    <property type="term" value="F:NAD+ kinase activity"/>
    <property type="evidence" value="ECO:0007669"/>
    <property type="project" value="UniProtKB-UniRule"/>
</dbReference>
<dbReference type="GO" id="GO:0019674">
    <property type="term" value="P:NAD metabolic process"/>
    <property type="evidence" value="ECO:0007669"/>
    <property type="project" value="InterPro"/>
</dbReference>
<dbReference type="GO" id="GO:0006741">
    <property type="term" value="P:NADP biosynthetic process"/>
    <property type="evidence" value="ECO:0007669"/>
    <property type="project" value="UniProtKB-UniRule"/>
</dbReference>
<dbReference type="FunFam" id="2.60.200.30:FF:000001">
    <property type="entry name" value="NAD kinase"/>
    <property type="match status" value="1"/>
</dbReference>
<dbReference type="Gene3D" id="3.40.50.10330">
    <property type="entry name" value="Probable inorganic polyphosphate/atp-NAD kinase, domain 1"/>
    <property type="match status" value="1"/>
</dbReference>
<dbReference type="Gene3D" id="2.60.200.30">
    <property type="entry name" value="Probable inorganic polyphosphate/atp-NAD kinase, domain 2"/>
    <property type="match status" value="1"/>
</dbReference>
<dbReference type="HAMAP" id="MF_00361">
    <property type="entry name" value="NAD_kinase"/>
    <property type="match status" value="1"/>
</dbReference>
<dbReference type="InterPro" id="IPR017438">
    <property type="entry name" value="ATP-NAD_kinase_N"/>
</dbReference>
<dbReference type="InterPro" id="IPR017437">
    <property type="entry name" value="ATP-NAD_kinase_PpnK-typ_C"/>
</dbReference>
<dbReference type="InterPro" id="IPR016064">
    <property type="entry name" value="NAD/diacylglycerol_kinase_sf"/>
</dbReference>
<dbReference type="InterPro" id="IPR002504">
    <property type="entry name" value="NADK"/>
</dbReference>
<dbReference type="NCBIfam" id="NF002306">
    <property type="entry name" value="PRK01231.1"/>
    <property type="match status" value="1"/>
</dbReference>
<dbReference type="NCBIfam" id="NF002893">
    <property type="entry name" value="PRK03378.1"/>
    <property type="match status" value="1"/>
</dbReference>
<dbReference type="PANTHER" id="PTHR20275">
    <property type="entry name" value="NAD KINASE"/>
    <property type="match status" value="1"/>
</dbReference>
<dbReference type="PANTHER" id="PTHR20275:SF0">
    <property type="entry name" value="NAD KINASE"/>
    <property type="match status" value="1"/>
</dbReference>
<dbReference type="Pfam" id="PF01513">
    <property type="entry name" value="NAD_kinase"/>
    <property type="match status" value="1"/>
</dbReference>
<dbReference type="Pfam" id="PF20143">
    <property type="entry name" value="NAD_kinase_C"/>
    <property type="match status" value="1"/>
</dbReference>
<dbReference type="SUPFAM" id="SSF111331">
    <property type="entry name" value="NAD kinase/diacylglycerol kinase-like"/>
    <property type="match status" value="1"/>
</dbReference>
<comment type="function">
    <text evidence="1">Involved in the regulation of the intracellular balance of NAD and NADP, and is a key enzyme in the biosynthesis of NADP. Catalyzes specifically the phosphorylation on 2'-hydroxyl of the adenosine moiety of NAD to yield NADP.</text>
</comment>
<comment type="catalytic activity">
    <reaction evidence="1">
        <text>NAD(+) + ATP = ADP + NADP(+) + H(+)</text>
        <dbReference type="Rhea" id="RHEA:18629"/>
        <dbReference type="ChEBI" id="CHEBI:15378"/>
        <dbReference type="ChEBI" id="CHEBI:30616"/>
        <dbReference type="ChEBI" id="CHEBI:57540"/>
        <dbReference type="ChEBI" id="CHEBI:58349"/>
        <dbReference type="ChEBI" id="CHEBI:456216"/>
        <dbReference type="EC" id="2.7.1.23"/>
    </reaction>
</comment>
<comment type="cofactor">
    <cofactor evidence="1">
        <name>a divalent metal cation</name>
        <dbReference type="ChEBI" id="CHEBI:60240"/>
    </cofactor>
</comment>
<comment type="subcellular location">
    <subcellularLocation>
        <location evidence="1">Cytoplasm</location>
    </subcellularLocation>
</comment>
<comment type="similarity">
    <text evidence="1">Belongs to the NAD kinase family.</text>
</comment>
<protein>
    <recommendedName>
        <fullName evidence="1">NAD kinase</fullName>
        <ecNumber evidence="1">2.7.1.23</ecNumber>
    </recommendedName>
    <alternativeName>
        <fullName evidence="1">ATP-dependent NAD kinase</fullName>
    </alternativeName>
</protein>
<name>NADK_VIBA3</name>
<keyword id="KW-0067">ATP-binding</keyword>
<keyword id="KW-0963">Cytoplasm</keyword>
<keyword id="KW-0418">Kinase</keyword>
<keyword id="KW-0520">NAD</keyword>
<keyword id="KW-0521">NADP</keyword>
<keyword id="KW-0547">Nucleotide-binding</keyword>
<keyword id="KW-0808">Transferase</keyword>
<accession>B7VJW6</accession>
<gene>
    <name evidence="1" type="primary">nadK</name>
    <name type="ordered locus">VS_0648</name>
</gene>
<feature type="chain" id="PRO_1000192529" description="NAD kinase">
    <location>
        <begin position="1"/>
        <end position="294"/>
    </location>
</feature>
<feature type="active site" description="Proton acceptor" evidence="1">
    <location>
        <position position="74"/>
    </location>
</feature>
<feature type="binding site" evidence="1">
    <location>
        <begin position="74"/>
        <end position="75"/>
    </location>
    <ligand>
        <name>NAD(+)</name>
        <dbReference type="ChEBI" id="CHEBI:57540"/>
    </ligand>
</feature>
<feature type="binding site" evidence="1">
    <location>
        <begin position="148"/>
        <end position="149"/>
    </location>
    <ligand>
        <name>NAD(+)</name>
        <dbReference type="ChEBI" id="CHEBI:57540"/>
    </ligand>
</feature>
<feature type="binding site" evidence="1">
    <location>
        <position position="159"/>
    </location>
    <ligand>
        <name>NAD(+)</name>
        <dbReference type="ChEBI" id="CHEBI:57540"/>
    </ligand>
</feature>
<feature type="binding site" evidence="1">
    <location>
        <position position="176"/>
    </location>
    <ligand>
        <name>NAD(+)</name>
        <dbReference type="ChEBI" id="CHEBI:57540"/>
    </ligand>
</feature>
<feature type="binding site" evidence="1">
    <location>
        <position position="178"/>
    </location>
    <ligand>
        <name>NAD(+)</name>
        <dbReference type="ChEBI" id="CHEBI:57540"/>
    </ligand>
</feature>
<feature type="binding site" evidence="1">
    <location>
        <begin position="189"/>
        <end position="194"/>
    </location>
    <ligand>
        <name>NAD(+)</name>
        <dbReference type="ChEBI" id="CHEBI:57540"/>
    </ligand>
</feature>
<feature type="binding site" evidence="1">
    <location>
        <position position="249"/>
    </location>
    <ligand>
        <name>NAD(+)</name>
        <dbReference type="ChEBI" id="CHEBI:57540"/>
    </ligand>
</feature>